<evidence type="ECO:0000250" key="1">
    <source>
        <dbReference type="UniProtKB" id="Q15431"/>
    </source>
</evidence>
<evidence type="ECO:0000250" key="2">
    <source>
        <dbReference type="UniProtKB" id="Q62209"/>
    </source>
</evidence>
<evidence type="ECO:0000255" key="3"/>
<evidence type="ECO:0000256" key="4">
    <source>
        <dbReference type="SAM" id="MobiDB-lite"/>
    </source>
</evidence>
<evidence type="ECO:0000269" key="5">
    <source>
    </source>
</evidence>
<evidence type="ECO:0000303" key="6">
    <source>
    </source>
</evidence>
<evidence type="ECO:0000305" key="7"/>
<evidence type="ECO:0000305" key="8">
    <source>
    </source>
</evidence>
<evidence type="ECO:0000312" key="9">
    <source>
        <dbReference type="RGD" id="3794"/>
    </source>
</evidence>
<evidence type="ECO:0007744" key="10">
    <source>
    </source>
</evidence>
<name>SYCP1_RAT</name>
<dbReference type="EMBL" id="X67805">
    <property type="protein sequence ID" value="CAA48006.1"/>
    <property type="status" value="ALT_FRAME"/>
    <property type="molecule type" value="mRNA"/>
</dbReference>
<dbReference type="PIR" id="S28061">
    <property type="entry name" value="S28061"/>
</dbReference>
<dbReference type="RefSeq" id="NP_036942.1">
    <property type="nucleotide sequence ID" value="NM_012810.1"/>
</dbReference>
<dbReference type="SMR" id="Q03410"/>
<dbReference type="FunCoup" id="Q03410">
    <property type="interactions" value="34"/>
</dbReference>
<dbReference type="IntAct" id="Q03410">
    <property type="interactions" value="1"/>
</dbReference>
<dbReference type="MINT" id="Q03410"/>
<dbReference type="STRING" id="10116.ENSRNOP00000023333"/>
<dbReference type="iPTMnet" id="Q03410"/>
<dbReference type="PhosphoSitePlus" id="Q03410"/>
<dbReference type="PaxDb" id="10116-ENSRNOP00000023333"/>
<dbReference type="GeneID" id="25276"/>
<dbReference type="KEGG" id="rno:25276"/>
<dbReference type="UCSC" id="RGD:3794">
    <property type="organism name" value="rat"/>
</dbReference>
<dbReference type="AGR" id="RGD:3794"/>
<dbReference type="CTD" id="6847"/>
<dbReference type="RGD" id="3794">
    <property type="gene designation" value="Sycp1"/>
</dbReference>
<dbReference type="eggNOG" id="ENOG502QTHX">
    <property type="taxonomic scope" value="Eukaryota"/>
</dbReference>
<dbReference type="InParanoid" id="Q03410"/>
<dbReference type="OrthoDB" id="10064612at2759"/>
<dbReference type="PhylomeDB" id="Q03410"/>
<dbReference type="PRO" id="PR:Q03410"/>
<dbReference type="Proteomes" id="UP000002494">
    <property type="component" value="Unplaced"/>
</dbReference>
<dbReference type="GO" id="GO:0030849">
    <property type="term" value="C:autosome"/>
    <property type="evidence" value="ECO:0000266"/>
    <property type="project" value="RGD"/>
</dbReference>
<dbReference type="GO" id="GO:0000801">
    <property type="term" value="C:central element"/>
    <property type="evidence" value="ECO:0000266"/>
    <property type="project" value="RGD"/>
</dbReference>
<dbReference type="GO" id="GO:0005694">
    <property type="term" value="C:chromosome"/>
    <property type="evidence" value="ECO:0000266"/>
    <property type="project" value="RGD"/>
</dbReference>
<dbReference type="GO" id="GO:0000775">
    <property type="term" value="C:chromosome, centromeric region"/>
    <property type="evidence" value="ECO:0007669"/>
    <property type="project" value="UniProtKB-SubCell"/>
</dbReference>
<dbReference type="GO" id="GO:0000794">
    <property type="term" value="C:condensed nuclear chromosome"/>
    <property type="evidence" value="ECO:0000266"/>
    <property type="project" value="RGD"/>
</dbReference>
<dbReference type="GO" id="GO:0001673">
    <property type="term" value="C:male germ cell nucleus"/>
    <property type="evidence" value="ECO:0000266"/>
    <property type="project" value="RGD"/>
</dbReference>
<dbReference type="GO" id="GO:0000795">
    <property type="term" value="C:synaptonemal complex"/>
    <property type="evidence" value="ECO:0000314"/>
    <property type="project" value="MGI"/>
</dbReference>
<dbReference type="GO" id="GO:0000802">
    <property type="term" value="C:transverse filament"/>
    <property type="evidence" value="ECO:0000314"/>
    <property type="project" value="RGD"/>
</dbReference>
<dbReference type="GO" id="GO:0003690">
    <property type="term" value="F:double-stranded DNA binding"/>
    <property type="evidence" value="ECO:0000250"/>
    <property type="project" value="UniProtKB"/>
</dbReference>
<dbReference type="GO" id="GO:0051301">
    <property type="term" value="P:cell division"/>
    <property type="evidence" value="ECO:0007669"/>
    <property type="project" value="UniProtKB-KW"/>
</dbReference>
<dbReference type="GO" id="GO:0051026">
    <property type="term" value="P:chiasma assembly"/>
    <property type="evidence" value="ECO:0000266"/>
    <property type="project" value="RGD"/>
</dbReference>
<dbReference type="GO" id="GO:0007129">
    <property type="term" value="P:homologous chromosome pairing at meiosis"/>
    <property type="evidence" value="ECO:0000250"/>
    <property type="project" value="UniProtKB"/>
</dbReference>
<dbReference type="GO" id="GO:0051878">
    <property type="term" value="P:lateral element assembly"/>
    <property type="evidence" value="ECO:0000266"/>
    <property type="project" value="RGD"/>
</dbReference>
<dbReference type="GO" id="GO:0000711">
    <property type="term" value="P:meiotic DNA repair synthesis"/>
    <property type="evidence" value="ECO:0000266"/>
    <property type="project" value="RGD"/>
</dbReference>
<dbReference type="GO" id="GO:0051289">
    <property type="term" value="P:protein homotetramerization"/>
    <property type="evidence" value="ECO:0000250"/>
    <property type="project" value="UniProtKB"/>
</dbReference>
<dbReference type="GO" id="GO:0007131">
    <property type="term" value="P:reciprocal meiotic recombination"/>
    <property type="evidence" value="ECO:0000250"/>
    <property type="project" value="UniProtKB"/>
</dbReference>
<dbReference type="GO" id="GO:0032880">
    <property type="term" value="P:regulation of protein localization"/>
    <property type="evidence" value="ECO:0000266"/>
    <property type="project" value="RGD"/>
</dbReference>
<dbReference type="GO" id="GO:0035092">
    <property type="term" value="P:sperm DNA condensation"/>
    <property type="evidence" value="ECO:0000266"/>
    <property type="project" value="RGD"/>
</dbReference>
<dbReference type="GO" id="GO:0007283">
    <property type="term" value="P:spermatogenesis"/>
    <property type="evidence" value="ECO:0000266"/>
    <property type="project" value="RGD"/>
</dbReference>
<dbReference type="GO" id="GO:0007130">
    <property type="term" value="P:synaptonemal complex assembly"/>
    <property type="evidence" value="ECO:0000250"/>
    <property type="project" value="UniProtKB"/>
</dbReference>
<dbReference type="InterPro" id="IPR008827">
    <property type="entry name" value="SYCP1"/>
</dbReference>
<dbReference type="PANTHER" id="PTHR46918">
    <property type="entry name" value="SYNAPTONEMAL COMPLEX PROTEIN 1"/>
    <property type="match status" value="1"/>
</dbReference>
<dbReference type="PANTHER" id="PTHR46918:SF1">
    <property type="entry name" value="SYNAPTONEMAL COMPLEX PROTEIN 1"/>
    <property type="match status" value="1"/>
</dbReference>
<dbReference type="Pfam" id="PF05483">
    <property type="entry name" value="SCP-1"/>
    <property type="match status" value="1"/>
</dbReference>
<keyword id="KW-0131">Cell cycle</keyword>
<keyword id="KW-0132">Cell division</keyword>
<keyword id="KW-0137">Centromere</keyword>
<keyword id="KW-0158">Chromosome</keyword>
<keyword id="KW-0175">Coiled coil</keyword>
<keyword id="KW-0238">DNA-binding</keyword>
<keyword id="KW-0469">Meiosis</keyword>
<keyword id="KW-0539">Nucleus</keyword>
<keyword id="KW-0597">Phosphoprotein</keyword>
<keyword id="KW-1185">Reference proteome</keyword>
<accession>Q03410</accession>
<proteinExistence type="evidence at protein level"/>
<gene>
    <name evidence="9" type="primary">Sycp1</name>
    <name evidence="6" type="synonym">Scp1</name>
</gene>
<organism>
    <name type="scientific">Rattus norvegicus</name>
    <name type="common">Rat</name>
    <dbReference type="NCBI Taxonomy" id="10116"/>
    <lineage>
        <taxon>Eukaryota</taxon>
        <taxon>Metazoa</taxon>
        <taxon>Chordata</taxon>
        <taxon>Craniata</taxon>
        <taxon>Vertebrata</taxon>
        <taxon>Euteleostomi</taxon>
        <taxon>Mammalia</taxon>
        <taxon>Eutheria</taxon>
        <taxon>Euarchontoglires</taxon>
        <taxon>Glires</taxon>
        <taxon>Rodentia</taxon>
        <taxon>Myomorpha</taxon>
        <taxon>Muroidea</taxon>
        <taxon>Muridae</taxon>
        <taxon>Murinae</taxon>
        <taxon>Rattus</taxon>
    </lineage>
</organism>
<comment type="function">
    <text evidence="2 5">Major component of the transverse filaments of synaptonemal complexes, formed between homologous chromosomes during meiotic prophase (PubMed:1464329). Required for normal assembly of the central element of the synaptonemal complexes. Required for normal centromere pairing during meiosis. Required for normal meiotic chromosome synapsis during oocyte and spermatocyte development and for normal male and female fertility.</text>
</comment>
<comment type="subunit">
    <text evidence="1 2">Structural component of synaptonemal complexes (By similarity). Homotetramer that consists of an N-terminal four-helical bundle that bifurcates into two elongated C-terminal dimeric coiled coils. This tetrameric building block potentially self-assembles into a supramolecular zipper-like lattice to mediate meiotic chromosome synapsis. Self-assembly is likely initiated by local proton density at chromosome axis, which is predicted to trigger antiparallel back to back assembly of adjacent C-terminal ends into tetrameric structures that anchor to chromosomal DNA. Then the N-terminal ends are predicted to undergo cooperative antiparallel head to head assembly at the midline of synaptonemal complexes central element to form a zipper-like lattice between properly aligned homologous chromosomes (By similarity). The nascent synapsis generated by SYCP1 is stabilized through interaction with central element proteins SYCE1 and SYCE2 (By similarity). Interacts (via tetrameric core) with SYCE3; the interaction remodels SYCP1 homotetramers to 2:1 heterotrimers with SYCE3 (By similarity). SYCP1/SYCE3 heterotrimers form lattice assemblies as part of the mature synaptonemal complex via both lateral and head-to-head interactions (By similarity). Forms a complex with EWSR1, PRDM9, SYCP3 and REC8; complex formation is dependent of phosphorylated form of REC8 and requires PRDM9 bound to hotspot DNA; EWSR1 joins PRDM9 with the chromosomal axis through REC8 (By similarity). Interacts with SPO16 (By similarity).</text>
</comment>
<comment type="subcellular location">
    <subcellularLocation>
        <location evidence="2">Nucleus</location>
    </subcellularLocation>
    <subcellularLocation>
        <location evidence="5">Chromosome</location>
    </subcellularLocation>
    <subcellularLocation>
        <location evidence="2">Chromosome</location>
        <location evidence="2">Centromere</location>
    </subcellularLocation>
    <text evidence="2 5">In tripartite segments of synaptonemal complexes, between lateral elements in the nucleus. Its N-terminus is found towards the center of the synaptonemal complex while the C-terminus extends well into the lateral domain of the synaptonemal complex (PubMed:1464329). Only rarely detected at centromeres during leptotene and zygotene. Detected at centromeres during mid-diplotene, when it is no longer present along chromosome arms. No longer detected at centromeres at later stages of meiosis (By similarity).</text>
</comment>
<comment type="tissue specificity">
    <text evidence="5">Testis.</text>
</comment>
<comment type="developmental stage">
    <text evidence="5">Expressed exclusively in meiotic prophase cells.</text>
</comment>
<comment type="domain">
    <text evidence="1 8">The molecule is in a coiled coil structure that is formed by 4 polypeptide chains. The N-terminal region exhibits a prominent seven-residues periodicity.</text>
</comment>
<comment type="sequence caution" evidence="7">
    <conflict type="frameshift">
        <sequence resource="EMBL-CDS" id="CAA48006"/>
    </conflict>
</comment>
<reference key="1">
    <citation type="journal article" date="1992" name="EMBO J.">
        <title>A coiled-coil related protein specific for synapsed regions of meiotic prophase chromosomes.</title>
        <authorList>
            <person name="Meuwissen R.L.J."/>
            <person name="Offenberg H.H."/>
            <person name="Dietrich A.J."/>
            <person name="Riesewijk A."/>
            <person name="Iersel M."/>
            <person name="Heyting C."/>
        </authorList>
    </citation>
    <scope>NUCLEOTIDE SEQUENCE [MRNA]</scope>
    <scope>FUNCTION</scope>
    <scope>SUBCELLULAR LOCATION</scope>
    <scope>SUBUNIT</scope>
    <scope>TISSUE SPECIFICITY</scope>
    <scope>DEVELOPMENTAL STAGE</scope>
    <scope>DOMAIN</scope>
    <source>
        <tissue>Testis</tissue>
    </source>
</reference>
<reference key="2">
    <citation type="journal article" date="2012" name="Nat. Commun.">
        <title>Quantitative maps of protein phosphorylation sites across 14 different rat organs and tissues.</title>
        <authorList>
            <person name="Lundby A."/>
            <person name="Secher A."/>
            <person name="Lage K."/>
            <person name="Nordsborg N.B."/>
            <person name="Dmytriyev A."/>
            <person name="Lundby C."/>
            <person name="Olsen J.V."/>
        </authorList>
    </citation>
    <scope>PHOSPHORYLATION [LARGE SCALE ANALYSIS] AT SER-824 AND THR-940</scope>
    <scope>IDENTIFICATION BY MASS SPECTROMETRY [LARGE SCALE ANALYSIS]</scope>
</reference>
<sequence length="997" mass="116511">MEKQKPFTLFVPPRLSSSQVSAVKPQTAGGDSNYFKTVNKCTEGDFGVPLTMSSLSKNRENIDTDPAFQKLSILPMLEQVANSGSCHYQEGVNDSDFENSEPMSRLYSKLYKEAEKIKKWKVSIESELKQKENKLQENRKIIEAQRKAIQELQFENEKVSLKLEEEIQENKDLIKENNATRHWCNLLKETCARSAEKTSKYEYEREETRQVYVDLNNNIEKMILAFEELRVQAENARLEMHFKLKEDHEKIQHLEEEYQKEVNNKENQVSLLLIQSTEKENKMKDLTFLLEESRDKANQLEEKTKLQDENLKELNEKKDHLTSELEDIKMSMQRSMSTQKTLEEDLQIATKTIYQLTEEKEAQMEELNKAKTTHSLVVTELKATTCTLEELLRTEQQRLENNEDQLKLITMELQKKSSELEEMTKFKNNKEVELEELKTILAEDQKLLDEKKQVEKLAEELQGKEQELTFLLQTREKEIHDLEVQVTVTKTSEEHYLKQVEEMKTELEKEKLKNIELTANSDMLLLENKKLVQEASDMVLELKKHQEDIINCKKQEERMLKQIETLEEKEMNLRDELESVRKEFIQQGDEVKCKLDKSEENARSIEYEVLKKEKQMKILENKCNNLKKQIENKSKNIEELHQENKALKKKSSAENKQLNAYEIKVNKLELELASTKQKFEEMINNYQKEIEIKKISEEKLLGEVEKAKATVDEAVKLQKEIDLRCQHKIAEMVALMEKHKHQYDKIVEERDSELGLYKNREQEQSSAKVALETELSNIRNELVSLKKQLEVEKEEKEKLKMEQENTAILTDKKDKKIQASLLESPEATSWKFDSKTTPSQNISRLSSSMDSGKSKDNRDSLRASAKSILSTTVTKEYTVKTPTKKSIYQRENKYLPTGGSNKKRKTVFEFDVNSDSSETTDLLSLVSEEDISNRIYNNNTPDSHLLVKTPKQTPLSLSTPASFTKFGSLKKMREDRWATIAKIDRKRRLKEAEKLFT</sequence>
<protein>
    <recommendedName>
        <fullName evidence="2">Synaptonemal complex protein 1</fullName>
        <shortName>SCP-1</shortName>
    </recommendedName>
</protein>
<feature type="chain" id="PRO_0000072365" description="Synaptonemal complex protein 1">
    <location>
        <begin position="1"/>
        <end position="997"/>
    </location>
</feature>
<feature type="region of interest" description="Interaction with SYCE3" evidence="1">
    <location>
        <begin position="207"/>
        <end position="363"/>
    </location>
</feature>
<feature type="region of interest" description="Required for pH-induced assembly of C-terminal ends into antiparallel tetramers" evidence="1">
    <location>
        <begin position="698"/>
        <end position="792"/>
    </location>
</feature>
<feature type="region of interest" description="DNA-binding" evidence="1">
    <location>
        <begin position="805"/>
        <end position="997"/>
    </location>
</feature>
<feature type="region of interest" description="Disordered" evidence="4">
    <location>
        <begin position="828"/>
        <end position="863"/>
    </location>
</feature>
<feature type="coiled-coil region" evidence="3">
    <location>
        <begin position="121"/>
        <end position="176"/>
    </location>
</feature>
<feature type="coiled-coil region" evidence="3">
    <location>
        <begin position="212"/>
        <end position="696"/>
    </location>
</feature>
<feature type="coiled-coil region" evidence="3">
    <location>
        <begin position="768"/>
        <end position="806"/>
    </location>
</feature>
<feature type="short sequence motif" description="Mediates head to head self-assembly of N-terminal ends" evidence="1">
    <location>
        <begin position="102"/>
        <end position="112"/>
    </location>
</feature>
<feature type="short sequence motif" description="Nuclear localization signal" evidence="3">
    <location>
        <begin position="118"/>
        <end position="121"/>
    </location>
</feature>
<feature type="short sequence motif" description="Nuclear localization signal" evidence="3">
    <location>
        <begin position="701"/>
        <end position="704"/>
    </location>
</feature>
<feature type="short sequence motif" description="Nuclear localization signal" evidence="3">
    <location>
        <begin position="902"/>
        <end position="905"/>
    </location>
</feature>
<feature type="compositionally biased region" description="Polar residues" evidence="4">
    <location>
        <begin position="835"/>
        <end position="851"/>
    </location>
</feature>
<feature type="compositionally biased region" description="Basic and acidic residues" evidence="4">
    <location>
        <begin position="852"/>
        <end position="861"/>
    </location>
</feature>
<feature type="modified residue" description="Phosphoserine" evidence="10">
    <location>
        <position position="824"/>
    </location>
</feature>
<feature type="modified residue" description="Phosphothreonine" evidence="10">
    <location>
        <position position="940"/>
    </location>
</feature>